<sequence length="638" mass="68990">MQEIITNNIPTFKLQNDVDMVEETQPTTPTTQPTTPTTNTISTTTNTITSTLNTNNISPILEESEEEDSNELIIETDENNTSVSATGTTPTSSSSSSSSSPTNTTTTTTTTTTATTANNDFKNITSNNINKTNSNVNTNSEIKNIDNSIMNSLNRYNNITTASPSNSTMITMKSAISSLDEIVKNTMKAQRESFIANEDKESLPEPQTNSNVNGNEEAKDEKEIHLLAKILLNFSSNGIAVPNLSESSPAVLNTKLKDSSNLVPYGGDLNTSVNGVVGNSSGMVDLSASTGDLLGSLNAANKKKRQRTSPEQLAILEQIFETDKMPSQQIRVRLANQLGMSSRRVQIWFQNKRAKVKRGGPFGKGDDNDDLFAEGEDIIDEDEDEDSSLTIDESGNNNNNSGNNNNNNNNGIMGGHGMLSSSPTNLNTSSDNIVPSISPMLTSININSSSSTPTLQSVNLLNNTNNNNNNNNNNNNNNNNNNNNNNNHTTTTTTTTTTTTTSSSPPLTSFNFQLNQSLNKLTSPPSPPSIVPSPNKKTKQMGGFSLNSTASSLPSFPQIKLNSSSKHIPTDKQNNSDFSNFNNNNNNNNNNNNNNNNNNNINNNGNNNSNNNDSNNNNNKSNFSDYQPLKFHNSIVKN</sequence>
<feature type="chain" id="PRO_0000388794" description="Homeobox protein 10">
    <location>
        <begin position="1"/>
        <end position="638"/>
    </location>
</feature>
<feature type="DNA-binding region" description="Homeobox" evidence="2">
    <location>
        <begin position="301"/>
        <end position="360"/>
    </location>
</feature>
<feature type="region of interest" description="Disordered" evidence="3">
    <location>
        <begin position="23"/>
        <end position="55"/>
    </location>
</feature>
<feature type="region of interest" description="Disordered" evidence="3">
    <location>
        <begin position="76"/>
        <end position="139"/>
    </location>
</feature>
<feature type="region of interest" description="Disordered" evidence="3">
    <location>
        <begin position="195"/>
        <end position="219"/>
    </location>
</feature>
<feature type="region of interest" description="Disordered" evidence="3">
    <location>
        <begin position="381"/>
        <end position="431"/>
    </location>
</feature>
<feature type="region of interest" description="Disordered" evidence="3">
    <location>
        <begin position="448"/>
        <end position="638"/>
    </location>
</feature>
<feature type="compositionally biased region" description="Low complexity" evidence="3">
    <location>
        <begin position="24"/>
        <end position="55"/>
    </location>
</feature>
<feature type="compositionally biased region" description="Low complexity" evidence="3">
    <location>
        <begin position="80"/>
        <end position="139"/>
    </location>
</feature>
<feature type="compositionally biased region" description="Polar residues" evidence="3">
    <location>
        <begin position="205"/>
        <end position="214"/>
    </location>
</feature>
<feature type="compositionally biased region" description="Low complexity" evidence="3">
    <location>
        <begin position="388"/>
        <end position="411"/>
    </location>
</feature>
<feature type="compositionally biased region" description="Low complexity" evidence="3">
    <location>
        <begin position="419"/>
        <end position="430"/>
    </location>
</feature>
<feature type="compositionally biased region" description="Low complexity" evidence="3">
    <location>
        <begin position="462"/>
        <end position="501"/>
    </location>
</feature>
<feature type="compositionally biased region" description="Polar residues" evidence="3">
    <location>
        <begin position="502"/>
        <end position="522"/>
    </location>
</feature>
<feature type="compositionally biased region" description="Polar residues" evidence="3">
    <location>
        <begin position="545"/>
        <end position="573"/>
    </location>
</feature>
<feature type="compositionally biased region" description="Low complexity" evidence="3">
    <location>
        <begin position="575"/>
        <end position="625"/>
    </location>
</feature>
<name>HBX10_DICDI</name>
<dbReference type="EMBL" id="AAFI02000064">
    <property type="protein sequence ID" value="EAL65335.1"/>
    <property type="molecule type" value="Genomic_DNA"/>
</dbReference>
<dbReference type="RefSeq" id="XP_638704.1">
    <property type="nucleotide sequence ID" value="XM_633612.1"/>
</dbReference>
<dbReference type="SMR" id="Q54PU1"/>
<dbReference type="FunCoup" id="Q54PU1">
    <property type="interactions" value="744"/>
</dbReference>
<dbReference type="STRING" id="44689.Q54PU1"/>
<dbReference type="GlyGen" id="Q54PU1">
    <property type="glycosylation" value="1 site"/>
</dbReference>
<dbReference type="PaxDb" id="44689-DDB0220476"/>
<dbReference type="EnsemblProtists" id="EAL65335">
    <property type="protein sequence ID" value="EAL65335"/>
    <property type="gene ID" value="DDB_G0284293"/>
</dbReference>
<dbReference type="GeneID" id="8624535"/>
<dbReference type="KEGG" id="ddi:DDB_G0284293"/>
<dbReference type="dictyBase" id="DDB_G0284293">
    <property type="gene designation" value="hbx10"/>
</dbReference>
<dbReference type="VEuPathDB" id="AmoebaDB:DDB_G0284293"/>
<dbReference type="eggNOG" id="KOG0490">
    <property type="taxonomic scope" value="Eukaryota"/>
</dbReference>
<dbReference type="HOGENOM" id="CLU_429259_0_0_1"/>
<dbReference type="InParanoid" id="Q54PU1"/>
<dbReference type="OMA" id="NGATHNL"/>
<dbReference type="PRO" id="PR:Q54PU1"/>
<dbReference type="Proteomes" id="UP000002195">
    <property type="component" value="Chromosome 4"/>
</dbReference>
<dbReference type="GO" id="GO:0005634">
    <property type="term" value="C:nucleus"/>
    <property type="evidence" value="ECO:0007669"/>
    <property type="project" value="UniProtKB-SubCell"/>
</dbReference>
<dbReference type="GO" id="GO:0000981">
    <property type="term" value="F:DNA-binding transcription factor activity, RNA polymerase II-specific"/>
    <property type="evidence" value="ECO:0007669"/>
    <property type="project" value="InterPro"/>
</dbReference>
<dbReference type="GO" id="GO:0000978">
    <property type="term" value="F:RNA polymerase II cis-regulatory region sequence-specific DNA binding"/>
    <property type="evidence" value="ECO:0000318"/>
    <property type="project" value="GO_Central"/>
</dbReference>
<dbReference type="GO" id="GO:0030154">
    <property type="term" value="P:cell differentiation"/>
    <property type="evidence" value="ECO:0000318"/>
    <property type="project" value="GO_Central"/>
</dbReference>
<dbReference type="GO" id="GO:0006357">
    <property type="term" value="P:regulation of transcription by RNA polymerase II"/>
    <property type="evidence" value="ECO:0000318"/>
    <property type="project" value="GO_Central"/>
</dbReference>
<dbReference type="CDD" id="cd00086">
    <property type="entry name" value="homeodomain"/>
    <property type="match status" value="1"/>
</dbReference>
<dbReference type="Gene3D" id="1.10.10.60">
    <property type="entry name" value="Homeodomain-like"/>
    <property type="match status" value="1"/>
</dbReference>
<dbReference type="InterPro" id="IPR001356">
    <property type="entry name" value="HD"/>
</dbReference>
<dbReference type="InterPro" id="IPR017970">
    <property type="entry name" value="Homeobox_CS"/>
</dbReference>
<dbReference type="InterPro" id="IPR051000">
    <property type="entry name" value="Homeobox_DNA-bind_prot"/>
</dbReference>
<dbReference type="InterPro" id="IPR009057">
    <property type="entry name" value="Homeodomain-like_sf"/>
</dbReference>
<dbReference type="PANTHER" id="PTHR24324:SF5">
    <property type="entry name" value="HEMATOPOIETICALLY-EXPRESSED HOMEOBOX PROTEIN HHEX"/>
    <property type="match status" value="1"/>
</dbReference>
<dbReference type="PANTHER" id="PTHR24324">
    <property type="entry name" value="HOMEOBOX PROTEIN HHEX"/>
    <property type="match status" value="1"/>
</dbReference>
<dbReference type="Pfam" id="PF00046">
    <property type="entry name" value="Homeodomain"/>
    <property type="match status" value="1"/>
</dbReference>
<dbReference type="SMART" id="SM00389">
    <property type="entry name" value="HOX"/>
    <property type="match status" value="1"/>
</dbReference>
<dbReference type="SUPFAM" id="SSF46689">
    <property type="entry name" value="Homeodomain-like"/>
    <property type="match status" value="1"/>
</dbReference>
<dbReference type="PROSITE" id="PS00027">
    <property type="entry name" value="HOMEOBOX_1"/>
    <property type="match status" value="1"/>
</dbReference>
<dbReference type="PROSITE" id="PS50071">
    <property type="entry name" value="HOMEOBOX_2"/>
    <property type="match status" value="1"/>
</dbReference>
<evidence type="ECO:0000250" key="1"/>
<evidence type="ECO:0000255" key="2">
    <source>
        <dbReference type="PROSITE-ProRule" id="PRU00108"/>
    </source>
</evidence>
<evidence type="ECO:0000256" key="3">
    <source>
        <dbReference type="SAM" id="MobiDB-lite"/>
    </source>
</evidence>
<organism>
    <name type="scientific">Dictyostelium discoideum</name>
    <name type="common">Social amoeba</name>
    <dbReference type="NCBI Taxonomy" id="44689"/>
    <lineage>
        <taxon>Eukaryota</taxon>
        <taxon>Amoebozoa</taxon>
        <taxon>Evosea</taxon>
        <taxon>Eumycetozoa</taxon>
        <taxon>Dictyostelia</taxon>
        <taxon>Dictyosteliales</taxon>
        <taxon>Dictyosteliaceae</taxon>
        <taxon>Dictyostelium</taxon>
    </lineage>
</organism>
<accession>Q54PU1</accession>
<comment type="function">
    <text evidence="1">Putative transcription factor.</text>
</comment>
<comment type="subcellular location">
    <subcellularLocation>
        <location evidence="2">Nucleus</location>
    </subcellularLocation>
</comment>
<proteinExistence type="inferred from homology"/>
<protein>
    <recommendedName>
        <fullName>Homeobox protein 10</fullName>
        <shortName>DdHbx-10</shortName>
    </recommendedName>
</protein>
<keyword id="KW-0217">Developmental protein</keyword>
<keyword id="KW-0238">DNA-binding</keyword>
<keyword id="KW-0371">Homeobox</keyword>
<keyword id="KW-0539">Nucleus</keyword>
<keyword id="KW-1185">Reference proteome</keyword>
<keyword id="KW-0804">Transcription</keyword>
<keyword id="KW-0805">Transcription regulation</keyword>
<reference key="1">
    <citation type="journal article" date="2005" name="Nature">
        <title>The genome of the social amoeba Dictyostelium discoideum.</title>
        <authorList>
            <person name="Eichinger L."/>
            <person name="Pachebat J.A."/>
            <person name="Gloeckner G."/>
            <person name="Rajandream M.A."/>
            <person name="Sucgang R."/>
            <person name="Berriman M."/>
            <person name="Song J."/>
            <person name="Olsen R."/>
            <person name="Szafranski K."/>
            <person name="Xu Q."/>
            <person name="Tunggal B."/>
            <person name="Kummerfeld S."/>
            <person name="Madera M."/>
            <person name="Konfortov B.A."/>
            <person name="Rivero F."/>
            <person name="Bankier A.T."/>
            <person name="Lehmann R."/>
            <person name="Hamlin N."/>
            <person name="Davies R."/>
            <person name="Gaudet P."/>
            <person name="Fey P."/>
            <person name="Pilcher K."/>
            <person name="Chen G."/>
            <person name="Saunders D."/>
            <person name="Sodergren E.J."/>
            <person name="Davis P."/>
            <person name="Kerhornou A."/>
            <person name="Nie X."/>
            <person name="Hall N."/>
            <person name="Anjard C."/>
            <person name="Hemphill L."/>
            <person name="Bason N."/>
            <person name="Farbrother P."/>
            <person name="Desany B."/>
            <person name="Just E."/>
            <person name="Morio T."/>
            <person name="Rost R."/>
            <person name="Churcher C.M."/>
            <person name="Cooper J."/>
            <person name="Haydock S."/>
            <person name="van Driessche N."/>
            <person name="Cronin A."/>
            <person name="Goodhead I."/>
            <person name="Muzny D.M."/>
            <person name="Mourier T."/>
            <person name="Pain A."/>
            <person name="Lu M."/>
            <person name="Harper D."/>
            <person name="Lindsay R."/>
            <person name="Hauser H."/>
            <person name="James K.D."/>
            <person name="Quiles M."/>
            <person name="Madan Babu M."/>
            <person name="Saito T."/>
            <person name="Buchrieser C."/>
            <person name="Wardroper A."/>
            <person name="Felder M."/>
            <person name="Thangavelu M."/>
            <person name="Johnson D."/>
            <person name="Knights A."/>
            <person name="Loulseged H."/>
            <person name="Mungall K.L."/>
            <person name="Oliver K."/>
            <person name="Price C."/>
            <person name="Quail M.A."/>
            <person name="Urushihara H."/>
            <person name="Hernandez J."/>
            <person name="Rabbinowitsch E."/>
            <person name="Steffen D."/>
            <person name="Sanders M."/>
            <person name="Ma J."/>
            <person name="Kohara Y."/>
            <person name="Sharp S."/>
            <person name="Simmonds M.N."/>
            <person name="Spiegler S."/>
            <person name="Tivey A."/>
            <person name="Sugano S."/>
            <person name="White B."/>
            <person name="Walker D."/>
            <person name="Woodward J.R."/>
            <person name="Winckler T."/>
            <person name="Tanaka Y."/>
            <person name="Shaulsky G."/>
            <person name="Schleicher M."/>
            <person name="Weinstock G.M."/>
            <person name="Rosenthal A."/>
            <person name="Cox E.C."/>
            <person name="Chisholm R.L."/>
            <person name="Gibbs R.A."/>
            <person name="Loomis W.F."/>
            <person name="Platzer M."/>
            <person name="Kay R.R."/>
            <person name="Williams J.G."/>
            <person name="Dear P.H."/>
            <person name="Noegel A.A."/>
            <person name="Barrell B.G."/>
            <person name="Kuspa A."/>
        </authorList>
    </citation>
    <scope>NUCLEOTIDE SEQUENCE [LARGE SCALE GENOMIC DNA]</scope>
    <source>
        <strain>AX4</strain>
    </source>
</reference>
<gene>
    <name type="primary">hbx10</name>
    <name type="ORF">DDB_G0284293</name>
</gene>